<name>RUVC_TRIV2</name>
<organism>
    <name type="scientific">Trichormus variabilis (strain ATCC 29413 / PCC 7937)</name>
    <name type="common">Anabaena variabilis</name>
    <dbReference type="NCBI Taxonomy" id="240292"/>
    <lineage>
        <taxon>Bacteria</taxon>
        <taxon>Bacillati</taxon>
        <taxon>Cyanobacteriota</taxon>
        <taxon>Cyanophyceae</taxon>
        <taxon>Nostocales</taxon>
        <taxon>Nostocaceae</taxon>
        <taxon>Trichormus</taxon>
    </lineage>
</organism>
<keyword id="KW-0963">Cytoplasm</keyword>
<keyword id="KW-0227">DNA damage</keyword>
<keyword id="KW-0233">DNA recombination</keyword>
<keyword id="KW-0234">DNA repair</keyword>
<keyword id="KW-0238">DNA-binding</keyword>
<keyword id="KW-0255">Endonuclease</keyword>
<keyword id="KW-0378">Hydrolase</keyword>
<keyword id="KW-0460">Magnesium</keyword>
<keyword id="KW-0479">Metal-binding</keyword>
<keyword id="KW-0540">Nuclease</keyword>
<dbReference type="EC" id="3.1.21.10" evidence="1"/>
<dbReference type="EMBL" id="CP000117">
    <property type="protein sequence ID" value="ABA19741.1"/>
    <property type="molecule type" value="Genomic_DNA"/>
</dbReference>
<dbReference type="SMR" id="Q3MGZ5"/>
<dbReference type="STRING" id="240292.Ava_0115"/>
<dbReference type="KEGG" id="ava:Ava_0115"/>
<dbReference type="eggNOG" id="COG0817">
    <property type="taxonomic scope" value="Bacteria"/>
</dbReference>
<dbReference type="HOGENOM" id="CLU_091257_3_1_3"/>
<dbReference type="Proteomes" id="UP000002533">
    <property type="component" value="Chromosome"/>
</dbReference>
<dbReference type="GO" id="GO:0005737">
    <property type="term" value="C:cytoplasm"/>
    <property type="evidence" value="ECO:0007669"/>
    <property type="project" value="UniProtKB-SubCell"/>
</dbReference>
<dbReference type="GO" id="GO:0048476">
    <property type="term" value="C:Holliday junction resolvase complex"/>
    <property type="evidence" value="ECO:0007669"/>
    <property type="project" value="UniProtKB-UniRule"/>
</dbReference>
<dbReference type="GO" id="GO:0008821">
    <property type="term" value="F:crossover junction DNA endonuclease activity"/>
    <property type="evidence" value="ECO:0007669"/>
    <property type="project" value="UniProtKB-UniRule"/>
</dbReference>
<dbReference type="GO" id="GO:0003677">
    <property type="term" value="F:DNA binding"/>
    <property type="evidence" value="ECO:0007669"/>
    <property type="project" value="UniProtKB-KW"/>
</dbReference>
<dbReference type="GO" id="GO:0000287">
    <property type="term" value="F:magnesium ion binding"/>
    <property type="evidence" value="ECO:0007669"/>
    <property type="project" value="UniProtKB-UniRule"/>
</dbReference>
<dbReference type="GO" id="GO:0006310">
    <property type="term" value="P:DNA recombination"/>
    <property type="evidence" value="ECO:0007669"/>
    <property type="project" value="UniProtKB-UniRule"/>
</dbReference>
<dbReference type="GO" id="GO:0006281">
    <property type="term" value="P:DNA repair"/>
    <property type="evidence" value="ECO:0007669"/>
    <property type="project" value="UniProtKB-UniRule"/>
</dbReference>
<dbReference type="CDD" id="cd16962">
    <property type="entry name" value="RuvC"/>
    <property type="match status" value="1"/>
</dbReference>
<dbReference type="FunFam" id="3.30.420.10:FF:000002">
    <property type="entry name" value="Crossover junction endodeoxyribonuclease RuvC"/>
    <property type="match status" value="1"/>
</dbReference>
<dbReference type="Gene3D" id="3.30.420.10">
    <property type="entry name" value="Ribonuclease H-like superfamily/Ribonuclease H"/>
    <property type="match status" value="1"/>
</dbReference>
<dbReference type="HAMAP" id="MF_00034">
    <property type="entry name" value="RuvC"/>
    <property type="match status" value="1"/>
</dbReference>
<dbReference type="InterPro" id="IPR012337">
    <property type="entry name" value="RNaseH-like_sf"/>
</dbReference>
<dbReference type="InterPro" id="IPR036397">
    <property type="entry name" value="RNaseH_sf"/>
</dbReference>
<dbReference type="InterPro" id="IPR020563">
    <property type="entry name" value="X-over_junc_endoDNase_Mg_BS"/>
</dbReference>
<dbReference type="InterPro" id="IPR002176">
    <property type="entry name" value="X-over_junc_endoDNase_RuvC"/>
</dbReference>
<dbReference type="NCBIfam" id="NF000711">
    <property type="entry name" value="PRK00039.2-1"/>
    <property type="match status" value="1"/>
</dbReference>
<dbReference type="NCBIfam" id="TIGR00228">
    <property type="entry name" value="ruvC"/>
    <property type="match status" value="1"/>
</dbReference>
<dbReference type="PANTHER" id="PTHR30194">
    <property type="entry name" value="CROSSOVER JUNCTION ENDODEOXYRIBONUCLEASE RUVC"/>
    <property type="match status" value="1"/>
</dbReference>
<dbReference type="PANTHER" id="PTHR30194:SF3">
    <property type="entry name" value="CROSSOVER JUNCTION ENDODEOXYRIBONUCLEASE RUVC"/>
    <property type="match status" value="1"/>
</dbReference>
<dbReference type="Pfam" id="PF02075">
    <property type="entry name" value="RuvC"/>
    <property type="match status" value="1"/>
</dbReference>
<dbReference type="PRINTS" id="PR00696">
    <property type="entry name" value="RSOLVASERUVC"/>
</dbReference>
<dbReference type="SUPFAM" id="SSF53098">
    <property type="entry name" value="Ribonuclease H-like"/>
    <property type="match status" value="1"/>
</dbReference>
<dbReference type="PROSITE" id="PS01321">
    <property type="entry name" value="RUVC"/>
    <property type="match status" value="1"/>
</dbReference>
<gene>
    <name evidence="1" type="primary">ruvC</name>
    <name type="ordered locus">Ava_0115</name>
</gene>
<proteinExistence type="inferred from homology"/>
<feature type="chain" id="PRO_1000002715" description="Crossover junction endodeoxyribonuclease RuvC">
    <location>
        <begin position="1"/>
        <end position="163"/>
    </location>
</feature>
<feature type="active site" evidence="1">
    <location>
        <position position="9"/>
    </location>
</feature>
<feature type="active site" evidence="1">
    <location>
        <position position="76"/>
    </location>
</feature>
<feature type="active site" evidence="1">
    <location>
        <position position="148"/>
    </location>
</feature>
<feature type="binding site" evidence="1">
    <location>
        <position position="9"/>
    </location>
    <ligand>
        <name>Mg(2+)</name>
        <dbReference type="ChEBI" id="CHEBI:18420"/>
        <label>1</label>
    </ligand>
</feature>
<feature type="binding site" evidence="1">
    <location>
        <position position="76"/>
    </location>
    <ligand>
        <name>Mg(2+)</name>
        <dbReference type="ChEBI" id="CHEBI:18420"/>
        <label>2</label>
    </ligand>
</feature>
<feature type="binding site" evidence="1">
    <location>
        <position position="148"/>
    </location>
    <ligand>
        <name>Mg(2+)</name>
        <dbReference type="ChEBI" id="CHEBI:18420"/>
        <label>1</label>
    </ligand>
</feature>
<protein>
    <recommendedName>
        <fullName evidence="1">Crossover junction endodeoxyribonuclease RuvC</fullName>
        <ecNumber evidence="1">3.1.21.10</ecNumber>
    </recommendedName>
    <alternativeName>
        <fullName evidence="1">Holliday junction nuclease RuvC</fullName>
    </alternativeName>
    <alternativeName>
        <fullName evidence="1">Holliday junction resolvase RuvC</fullName>
    </alternativeName>
</protein>
<comment type="function">
    <text evidence="1">The RuvA-RuvB-RuvC complex processes Holliday junction (HJ) DNA during genetic recombination and DNA repair. Endonuclease that resolves HJ intermediates. Cleaves cruciform DNA by making single-stranded nicks across the HJ at symmetrical positions within the homologous arms, yielding a 5'-phosphate and a 3'-hydroxyl group; requires a central core of homology in the junction. The consensus cleavage sequence is 5'-(A/T)TT(C/G)-3'. Cleavage occurs on the 3'-side of the TT dinucleotide at the point of strand exchange. HJ branch migration catalyzed by RuvA-RuvB allows RuvC to scan DNA until it finds its consensus sequence, where it cleaves and resolves the cruciform DNA.</text>
</comment>
<comment type="catalytic activity">
    <reaction evidence="1">
        <text>Endonucleolytic cleavage at a junction such as a reciprocal single-stranded crossover between two homologous DNA duplexes (Holliday junction).</text>
        <dbReference type="EC" id="3.1.21.10"/>
    </reaction>
</comment>
<comment type="cofactor">
    <cofactor evidence="1">
        <name>Mg(2+)</name>
        <dbReference type="ChEBI" id="CHEBI:18420"/>
    </cofactor>
    <text evidence="1">Binds 2 Mg(2+) ion per subunit.</text>
</comment>
<comment type="subunit">
    <text evidence="1">Homodimer which binds Holliday junction (HJ) DNA. The HJ becomes 2-fold symmetrical on binding to RuvC with unstacked arms; it has a different conformation from HJ DNA in complex with RuvA. In the full resolvosome a probable DNA-RuvA(4)-RuvB(12)-RuvC(2) complex forms which resolves the HJ.</text>
</comment>
<comment type="subcellular location">
    <subcellularLocation>
        <location evidence="1">Cytoplasm</location>
    </subcellularLocation>
</comment>
<comment type="similarity">
    <text evidence="1">Belongs to the RuvC family.</text>
</comment>
<evidence type="ECO:0000255" key="1">
    <source>
        <dbReference type="HAMAP-Rule" id="MF_00034"/>
    </source>
</evidence>
<sequence length="163" mass="17698">MEKRILGLDPGLAILGFGAITCTPGLTQLQSTKVNILDFGVIKTSADIEIGQRLCTLFDDLHTVIDNLQPDVVAIEKLFFYRMSSTIVVAQARGVVMLALAQHHLPYVEFTPAQVKLALTGYGNADKSEVQEAVARELDLAEIPQPDDAADALAVALTAWYQM</sequence>
<accession>Q3MGZ5</accession>
<reference key="1">
    <citation type="journal article" date="2014" name="Stand. Genomic Sci.">
        <title>Complete genome sequence of Anabaena variabilis ATCC 29413.</title>
        <authorList>
            <person name="Thiel T."/>
            <person name="Pratte B.S."/>
            <person name="Zhong J."/>
            <person name="Goodwin L."/>
            <person name="Copeland A."/>
            <person name="Lucas S."/>
            <person name="Han C."/>
            <person name="Pitluck S."/>
            <person name="Land M.L."/>
            <person name="Kyrpides N.C."/>
            <person name="Woyke T."/>
        </authorList>
    </citation>
    <scope>NUCLEOTIDE SEQUENCE [LARGE SCALE GENOMIC DNA]</scope>
    <source>
        <strain>ATCC 29413 / PCC 7937</strain>
    </source>
</reference>